<proteinExistence type="inferred from homology"/>
<accession>P60870</accession>
<accession>P71206</accession>
<accession>P75812</accession>
<feature type="chain" id="PRO_0000208783" description="Putative transport protein YbjL">
    <location>
        <begin position="1"/>
        <end position="561"/>
    </location>
</feature>
<feature type="transmembrane region" description="Helical" evidence="1">
    <location>
        <begin position="8"/>
        <end position="28"/>
    </location>
</feature>
<feature type="transmembrane region" description="Helical" evidence="1">
    <location>
        <begin position="32"/>
        <end position="52"/>
    </location>
</feature>
<feature type="transmembrane region" description="Helical" evidence="1">
    <location>
        <begin position="66"/>
        <end position="86"/>
    </location>
</feature>
<feature type="transmembrane region" description="Helical" evidence="1">
    <location>
        <begin position="94"/>
        <end position="114"/>
    </location>
</feature>
<feature type="transmembrane region" description="Helical" evidence="1">
    <location>
        <begin position="158"/>
        <end position="178"/>
    </location>
</feature>
<feature type="transmembrane region" description="Helical" evidence="1">
    <location>
        <begin position="383"/>
        <end position="403"/>
    </location>
</feature>
<feature type="transmembrane region" description="Helical" evidence="1">
    <location>
        <begin position="406"/>
        <end position="426"/>
    </location>
</feature>
<feature type="transmembrane region" description="Helical" evidence="1">
    <location>
        <begin position="451"/>
        <end position="471"/>
    </location>
</feature>
<feature type="transmembrane region" description="Helical" evidence="1">
    <location>
        <begin position="475"/>
        <end position="495"/>
    </location>
</feature>
<feature type="transmembrane region" description="Helical" evidence="1">
    <location>
        <begin position="540"/>
        <end position="560"/>
    </location>
</feature>
<feature type="domain" description="RCK C-terminal 1" evidence="1">
    <location>
        <begin position="200"/>
        <end position="288"/>
    </location>
</feature>
<feature type="domain" description="RCK C-terminal 2" evidence="1">
    <location>
        <begin position="292"/>
        <end position="373"/>
    </location>
</feature>
<keyword id="KW-1003">Cell membrane</keyword>
<keyword id="KW-0472">Membrane</keyword>
<keyword id="KW-1185">Reference proteome</keyword>
<keyword id="KW-0677">Repeat</keyword>
<keyword id="KW-0812">Transmembrane</keyword>
<keyword id="KW-1133">Transmembrane helix</keyword>
<keyword id="KW-0813">Transport</keyword>
<name>YBJL_ECOL6</name>
<protein>
    <recommendedName>
        <fullName evidence="1">Putative transport protein YbjL</fullName>
    </recommendedName>
</protein>
<gene>
    <name evidence="1" type="primary">ybjL</name>
    <name type="ordered locus">c0980</name>
</gene>
<dbReference type="EMBL" id="AE014075">
    <property type="protein sequence ID" value="AAN79453.1"/>
    <property type="molecule type" value="Genomic_DNA"/>
</dbReference>
<dbReference type="RefSeq" id="WP_001024876.1">
    <property type="nucleotide sequence ID" value="NZ_CP051263.1"/>
</dbReference>
<dbReference type="SMR" id="P60870"/>
<dbReference type="STRING" id="199310.c0980"/>
<dbReference type="KEGG" id="ecc:c0980"/>
<dbReference type="eggNOG" id="COG0569">
    <property type="taxonomic scope" value="Bacteria"/>
</dbReference>
<dbReference type="eggNOG" id="COG2985">
    <property type="taxonomic scope" value="Bacteria"/>
</dbReference>
<dbReference type="HOGENOM" id="CLU_035023_2_2_6"/>
<dbReference type="BioCyc" id="ECOL199310:C0980-MONOMER"/>
<dbReference type="Proteomes" id="UP000001410">
    <property type="component" value="Chromosome"/>
</dbReference>
<dbReference type="GO" id="GO:0005886">
    <property type="term" value="C:plasma membrane"/>
    <property type="evidence" value="ECO:0007669"/>
    <property type="project" value="UniProtKB-SubCell"/>
</dbReference>
<dbReference type="GO" id="GO:0008324">
    <property type="term" value="F:monoatomic cation transmembrane transporter activity"/>
    <property type="evidence" value="ECO:0007669"/>
    <property type="project" value="InterPro"/>
</dbReference>
<dbReference type="GO" id="GO:0006813">
    <property type="term" value="P:potassium ion transport"/>
    <property type="evidence" value="ECO:0007669"/>
    <property type="project" value="InterPro"/>
</dbReference>
<dbReference type="FunFam" id="3.30.70.1450:FF:000003">
    <property type="entry name" value="Putative transport protein YbjL"/>
    <property type="match status" value="1"/>
</dbReference>
<dbReference type="Gene3D" id="3.30.70.1450">
    <property type="entry name" value="Regulator of K+ conductance, C-terminal domain"/>
    <property type="match status" value="2"/>
</dbReference>
<dbReference type="HAMAP" id="MF_01015">
    <property type="entry name" value="YbjL"/>
    <property type="match status" value="1"/>
</dbReference>
<dbReference type="InterPro" id="IPR050144">
    <property type="entry name" value="AAE_transporter"/>
</dbReference>
<dbReference type="InterPro" id="IPR006037">
    <property type="entry name" value="RCK_C"/>
</dbReference>
<dbReference type="InterPro" id="IPR036721">
    <property type="entry name" value="RCK_C_sf"/>
</dbReference>
<dbReference type="InterPro" id="IPR023017">
    <property type="entry name" value="Transp_YbjL_put"/>
</dbReference>
<dbReference type="InterPro" id="IPR006512">
    <property type="entry name" value="YidE_YbjL"/>
</dbReference>
<dbReference type="NCBIfam" id="NF003440">
    <property type="entry name" value="PRK04972.1"/>
    <property type="match status" value="1"/>
</dbReference>
<dbReference type="NCBIfam" id="TIGR01625">
    <property type="entry name" value="YidE_YbjL_dupl"/>
    <property type="match status" value="2"/>
</dbReference>
<dbReference type="PANTHER" id="PTHR30445">
    <property type="entry name" value="K(+)_H(+) ANTIPORTER SUBUNIT KHTT"/>
    <property type="match status" value="1"/>
</dbReference>
<dbReference type="PANTHER" id="PTHR30445:SF10">
    <property type="entry name" value="TRANSPORT PROTEIN YBJL-RELATED"/>
    <property type="match status" value="1"/>
</dbReference>
<dbReference type="Pfam" id="PF06826">
    <property type="entry name" value="Asp-Al_Ex"/>
    <property type="match status" value="2"/>
</dbReference>
<dbReference type="Pfam" id="PF02080">
    <property type="entry name" value="TrkA_C"/>
    <property type="match status" value="2"/>
</dbReference>
<dbReference type="SUPFAM" id="SSF116726">
    <property type="entry name" value="TrkA C-terminal domain-like"/>
    <property type="match status" value="2"/>
</dbReference>
<dbReference type="PROSITE" id="PS51202">
    <property type="entry name" value="RCK_C"/>
    <property type="match status" value="2"/>
</dbReference>
<evidence type="ECO:0000255" key="1">
    <source>
        <dbReference type="HAMAP-Rule" id="MF_01015"/>
    </source>
</evidence>
<comment type="subcellular location">
    <subcellularLocation>
        <location evidence="1">Cell membrane</location>
        <topology evidence="1">Multi-pass membrane protein</topology>
    </subcellularLocation>
</comment>
<comment type="similarity">
    <text evidence="1">Belongs to the AAE transporter (TC 2.A.81) family. YbjL subfamily.</text>
</comment>
<organism>
    <name type="scientific">Escherichia coli O6:H1 (strain CFT073 / ATCC 700928 / UPEC)</name>
    <dbReference type="NCBI Taxonomy" id="199310"/>
    <lineage>
        <taxon>Bacteria</taxon>
        <taxon>Pseudomonadati</taxon>
        <taxon>Pseudomonadota</taxon>
        <taxon>Gammaproteobacteria</taxon>
        <taxon>Enterobacterales</taxon>
        <taxon>Enterobacteriaceae</taxon>
        <taxon>Escherichia</taxon>
    </lineage>
</organism>
<sequence length="561" mass="60351">MNINVAELLNGNYILLLFVVLALGLCLGKLRLGSIQLGNSIGVLVVSLLLGQQHFSINTDALNLGFMLFIFCVGVEAGPNFFSIFFRDGKNYLMLALVMVGSALVIALGLGKLFGWDIGLTAGMLAGSMTSTPVLVGAGDTLRHSGMESRQLSLALDNLSLGYALTYLIGLVSLIVGARYLPKLQHQDLQTSAQQIARERGLDTDANRKVYLPVIRAYRVGPELVAWTDGKNLRELGIYRQTGCYIERIRRNGILANPDGDAVLQMGDEIALVGYPDAHARLDPSFRNGKEVFDRDLLDMRIVTEEVVVKNHNAVGKRLAQLKLTDHGCFLNRVIRSQIEMPIDDNVVLNKGDVLQVSGDARRVKTIADRIGFISIHSQVTDLLAFCAFFVIGLMIGMITFQFSTFSFGMGNAAGLLFAGIMLGFMRANHPTFGYIPQGALSMVKEFGLMVFMAGVGLSAGSGINNGLGAIGGQMLIAGLIVSLVPVVICFLFGAYVLRMNRALLFGAMMGARTCAPAMEIISDTARSNIPALGYAGTYAIANVLLTLAGTIIVMVWPGLG</sequence>
<reference key="1">
    <citation type="journal article" date="2002" name="Proc. Natl. Acad. Sci. U.S.A.">
        <title>Extensive mosaic structure revealed by the complete genome sequence of uropathogenic Escherichia coli.</title>
        <authorList>
            <person name="Welch R.A."/>
            <person name="Burland V."/>
            <person name="Plunkett G. III"/>
            <person name="Redford P."/>
            <person name="Roesch P."/>
            <person name="Rasko D."/>
            <person name="Buckles E.L."/>
            <person name="Liou S.-R."/>
            <person name="Boutin A."/>
            <person name="Hackett J."/>
            <person name="Stroud D."/>
            <person name="Mayhew G.F."/>
            <person name="Rose D.J."/>
            <person name="Zhou S."/>
            <person name="Schwartz D.C."/>
            <person name="Perna N.T."/>
            <person name="Mobley H.L.T."/>
            <person name="Donnenberg M.S."/>
            <person name="Blattner F.R."/>
        </authorList>
    </citation>
    <scope>NUCLEOTIDE SEQUENCE [LARGE SCALE GENOMIC DNA]</scope>
    <source>
        <strain>CFT073 / ATCC 700928 / UPEC</strain>
    </source>
</reference>